<comment type="function">
    <text evidence="1">Removes N-terminal dipeptides sequentially from polypeptides having unsubstituted N-termini provided that the penultimate residue is proline.</text>
</comment>
<comment type="catalytic activity">
    <reaction evidence="1">
        <text>Hydrolyzes Xaa-Pro-|- bonds to release unblocked, N-terminal dipeptides from substrates including Ala-Pro-|-p-nitroanilide and (sequentially) Tyr-Pro-|-Phe-Pro-|-Gly-Pro-|-Ile.</text>
        <dbReference type="EC" id="3.4.14.11"/>
    </reaction>
</comment>
<comment type="subunit">
    <text evidence="1">Homodimer.</text>
</comment>
<comment type="subcellular location">
    <subcellularLocation>
        <location evidence="1">Cytoplasm</location>
    </subcellularLocation>
</comment>
<comment type="similarity">
    <text evidence="1">Belongs to the peptidase S15 family.</text>
</comment>
<gene>
    <name evidence="1" type="primary">pepX</name>
    <name type="ordered locus">lhv_1436</name>
</gene>
<organism>
    <name type="scientific">Lactobacillus helveticus (strain DPC 4571)</name>
    <dbReference type="NCBI Taxonomy" id="405566"/>
    <lineage>
        <taxon>Bacteria</taxon>
        <taxon>Bacillati</taxon>
        <taxon>Bacillota</taxon>
        <taxon>Bacilli</taxon>
        <taxon>Lactobacillales</taxon>
        <taxon>Lactobacillaceae</taxon>
        <taxon>Lactobacillus</taxon>
    </lineage>
</organism>
<evidence type="ECO:0000255" key="1">
    <source>
        <dbReference type="HAMAP-Rule" id="MF_00698"/>
    </source>
</evidence>
<sequence>MKYNQYAYVETDFQQQVKELIDINFLPKNYQVWDFSSLLAKLVKNAIAEAKTDAAKNAKLAEFAVSDHQTLADFLKEKPTEIGTEQFYNVALQLLGYHVHYDYDFADPTGFMQRNALPFVQDISDNQKLISAFYRLLNTRAKNGQILLDVMAGKGYFTQFWGQNKFKFFNGKSIPVFDTNKVIREVVYVETDLDTDHDGKSDLIQVTVFRPEETNKGLKVPALYTASPYFGGIIANEKRNHNVDENLSDSTEWNDPQYVHSPIVKAEKPDGSSRPATEEAVHKSSYPLNEYMLARGFASVFAGAIGTRGSDGVRITGAPEETESAAAVIEWLHGDRVAYTDRTRTVQTTADWCNGNIGMTGRSYLGTLQIAIATTGVKGLKTVVSEAAISSWYDYYREHGLVIAPEACQGEDLDLLAETCQSNLWDAGSYLKIKPEYDKMQKQLREKEDRNTGQYSDFWEARNYRHHADGIKCSWISVHGLNDWNVKPKNVYKIWQLVKKMPMKHHLFLHQGPHYNMNNFVSIDFTDFMNLWFVHELLGIENNAYNQWPTVMIQDNLQADKWHEEPDWSNDLGQEKIYYPTDEGELFQDGNGKAQKSFTDVGGIEFKKAGISESDWQYKFICGDEKWAKPSLRFETDEFIHPTTIVGRPEVKVRVSASLPKGEISVALVELGERQRLTATPKFLMRGGQELGYRFGTDTLQEFVPDKKTKAKLITKAHMNLQNFKDMKKPEAIDADKFYDLDFLLQPTYYTIPSGSKLALIIYSTDQGMTKRPLEDETYTIDLANTEIKFYEK</sequence>
<proteinExistence type="inferred from homology"/>
<accession>A8YVY9</accession>
<name>PEPX_LACH4</name>
<reference key="1">
    <citation type="journal article" date="2008" name="J. Bacteriol.">
        <title>Genome sequence of Lactobacillus helveticus: an organism distinguished by selective gene loss and IS element expansion.</title>
        <authorList>
            <person name="Callanan M."/>
            <person name="Kaleta P."/>
            <person name="O'Callaghan J."/>
            <person name="O'Sullivan O."/>
            <person name="Jordan K."/>
            <person name="McAuliffe O."/>
            <person name="Sangrador-Vegas A."/>
            <person name="Slattery L."/>
            <person name="Fitzgerald G.F."/>
            <person name="Beresford T."/>
            <person name="Ross R.P."/>
        </authorList>
    </citation>
    <scope>NUCLEOTIDE SEQUENCE [LARGE SCALE GENOMIC DNA]</scope>
    <source>
        <strain>DPC 4571</strain>
    </source>
</reference>
<protein>
    <recommendedName>
        <fullName evidence="1">Xaa-Pro dipeptidyl-peptidase</fullName>
        <ecNumber evidence="1">3.4.14.11</ecNumber>
    </recommendedName>
    <alternativeName>
        <fullName evidence="1">X-Pro dipeptidyl-peptidase</fullName>
    </alternativeName>
    <alternativeName>
        <fullName evidence="1">X-prolyl-dipeptidyl aminopeptidase</fullName>
        <shortName evidence="1">X-PDAP</shortName>
    </alternativeName>
</protein>
<keyword id="KW-0031">Aminopeptidase</keyword>
<keyword id="KW-0963">Cytoplasm</keyword>
<keyword id="KW-0378">Hydrolase</keyword>
<keyword id="KW-0645">Protease</keyword>
<keyword id="KW-0720">Serine protease</keyword>
<dbReference type="EC" id="3.4.14.11" evidence="1"/>
<dbReference type="EMBL" id="CP000517">
    <property type="protein sequence ID" value="ABX27419.1"/>
    <property type="molecule type" value="Genomic_DNA"/>
</dbReference>
<dbReference type="RefSeq" id="WP_012212045.1">
    <property type="nucleotide sequence ID" value="NC_010080.1"/>
</dbReference>
<dbReference type="SMR" id="A8YVY9"/>
<dbReference type="ESTHER" id="lache-pepx">
    <property type="family name" value="Lactobacillus_peptidase"/>
</dbReference>
<dbReference type="MEROPS" id="S15.001"/>
<dbReference type="KEGG" id="lhe:lhv_1436"/>
<dbReference type="eggNOG" id="COG2936">
    <property type="taxonomic scope" value="Bacteria"/>
</dbReference>
<dbReference type="HOGENOM" id="CLU_011800_0_0_9"/>
<dbReference type="Proteomes" id="UP000000790">
    <property type="component" value="Chromosome"/>
</dbReference>
<dbReference type="GO" id="GO:0005737">
    <property type="term" value="C:cytoplasm"/>
    <property type="evidence" value="ECO:0007669"/>
    <property type="project" value="UniProtKB-SubCell"/>
</dbReference>
<dbReference type="GO" id="GO:0004177">
    <property type="term" value="F:aminopeptidase activity"/>
    <property type="evidence" value="ECO:0007669"/>
    <property type="project" value="UniProtKB-KW"/>
</dbReference>
<dbReference type="GO" id="GO:0008239">
    <property type="term" value="F:dipeptidyl-peptidase activity"/>
    <property type="evidence" value="ECO:0007669"/>
    <property type="project" value="UniProtKB-UniRule"/>
</dbReference>
<dbReference type="GO" id="GO:0008236">
    <property type="term" value="F:serine-type peptidase activity"/>
    <property type="evidence" value="ECO:0007669"/>
    <property type="project" value="UniProtKB-KW"/>
</dbReference>
<dbReference type="GO" id="GO:0006508">
    <property type="term" value="P:proteolysis"/>
    <property type="evidence" value="ECO:0007669"/>
    <property type="project" value="UniProtKB-KW"/>
</dbReference>
<dbReference type="Gene3D" id="1.10.246.70">
    <property type="match status" value="1"/>
</dbReference>
<dbReference type="Gene3D" id="3.40.50.1820">
    <property type="entry name" value="alpha/beta hydrolase"/>
    <property type="match status" value="1"/>
</dbReference>
<dbReference type="Gene3D" id="2.60.120.260">
    <property type="entry name" value="Galactose-binding domain-like"/>
    <property type="match status" value="1"/>
</dbReference>
<dbReference type="HAMAP" id="MF_00698">
    <property type="entry name" value="Aminopeptidase_S15"/>
    <property type="match status" value="1"/>
</dbReference>
<dbReference type="InterPro" id="IPR029058">
    <property type="entry name" value="AB_hydrolase_fold"/>
</dbReference>
<dbReference type="InterPro" id="IPR008979">
    <property type="entry name" value="Galactose-bd-like_sf"/>
</dbReference>
<dbReference type="InterPro" id="IPR008252">
    <property type="entry name" value="Pept_S15_Xpro"/>
</dbReference>
<dbReference type="InterPro" id="IPR015251">
    <property type="entry name" value="PepX_N_dom"/>
</dbReference>
<dbReference type="InterPro" id="IPR036313">
    <property type="entry name" value="PepX_N_dom_sf"/>
</dbReference>
<dbReference type="InterPro" id="IPR000383">
    <property type="entry name" value="Xaa-Pro-like_dom"/>
</dbReference>
<dbReference type="InterPro" id="IPR013736">
    <property type="entry name" value="Xaa-Pro_dipept_C"/>
</dbReference>
<dbReference type="InterPro" id="IPR050585">
    <property type="entry name" value="Xaa-Pro_dipeptidyl-ppase/CocE"/>
</dbReference>
<dbReference type="NCBIfam" id="NF003781">
    <property type="entry name" value="PRK05371.1-2"/>
    <property type="match status" value="1"/>
</dbReference>
<dbReference type="PANTHER" id="PTHR43056:SF10">
    <property type="entry name" value="COCE_NOND FAMILY, PUTATIVE (AFU_ORTHOLOGUE AFUA_7G00600)-RELATED"/>
    <property type="match status" value="1"/>
</dbReference>
<dbReference type="PANTHER" id="PTHR43056">
    <property type="entry name" value="PEPTIDASE S9 PROLYL OLIGOPEPTIDASE"/>
    <property type="match status" value="1"/>
</dbReference>
<dbReference type="Pfam" id="PF02129">
    <property type="entry name" value="Peptidase_S15"/>
    <property type="match status" value="1"/>
</dbReference>
<dbReference type="Pfam" id="PF08530">
    <property type="entry name" value="PepX_C"/>
    <property type="match status" value="1"/>
</dbReference>
<dbReference type="Pfam" id="PF09168">
    <property type="entry name" value="PepX_N"/>
    <property type="match status" value="1"/>
</dbReference>
<dbReference type="PRINTS" id="PR00923">
    <property type="entry name" value="LACTOPTASE"/>
</dbReference>
<dbReference type="SMART" id="SM00939">
    <property type="entry name" value="PepX_C"/>
    <property type="match status" value="1"/>
</dbReference>
<dbReference type="SMART" id="SM00940">
    <property type="entry name" value="PepX_N"/>
    <property type="match status" value="1"/>
</dbReference>
<dbReference type="SUPFAM" id="SSF53474">
    <property type="entry name" value="alpha/beta-Hydrolases"/>
    <property type="match status" value="1"/>
</dbReference>
<dbReference type="SUPFAM" id="SSF49785">
    <property type="entry name" value="Galactose-binding domain-like"/>
    <property type="match status" value="1"/>
</dbReference>
<dbReference type="SUPFAM" id="SSF81761">
    <property type="entry name" value="X-Prolyl dipeptidyl aminopeptidase PepX, N-terminal domain"/>
    <property type="match status" value="1"/>
</dbReference>
<feature type="chain" id="PRO_1000072762" description="Xaa-Pro dipeptidyl-peptidase">
    <location>
        <begin position="1"/>
        <end position="793"/>
    </location>
</feature>
<feature type="active site" description="Charge relay system" evidence="1">
    <location>
        <position position="363"/>
    </location>
</feature>
<feature type="active site" description="Charge relay system" evidence="1">
    <location>
        <position position="483"/>
    </location>
</feature>
<feature type="active site" description="Charge relay system" evidence="1">
    <location>
        <position position="514"/>
    </location>
</feature>